<evidence type="ECO:0000255" key="1">
    <source>
        <dbReference type="HAMAP-Rule" id="MF_01691"/>
    </source>
</evidence>
<comment type="function">
    <text evidence="1">Catalyzes the transfer of an acetyl group from acetyl-CoA to tetrahydrodipicolinate.</text>
</comment>
<comment type="catalytic activity">
    <reaction evidence="1">
        <text>(S)-2,3,4,5-tetrahydrodipicolinate + acetyl-CoA + H2O = L-2-acetamido-6-oxoheptanedioate + CoA</text>
        <dbReference type="Rhea" id="RHEA:13085"/>
        <dbReference type="ChEBI" id="CHEBI:15377"/>
        <dbReference type="ChEBI" id="CHEBI:16845"/>
        <dbReference type="ChEBI" id="CHEBI:57287"/>
        <dbReference type="ChEBI" id="CHEBI:57288"/>
        <dbReference type="ChEBI" id="CHEBI:58117"/>
        <dbReference type="EC" id="2.3.1.89"/>
    </reaction>
</comment>
<comment type="pathway">
    <text evidence="1">Amino-acid biosynthesis; L-lysine biosynthesis via DAP pathway; LL-2,6-diaminopimelate from (S)-tetrahydrodipicolinate (acetylase route): step 1/3.</text>
</comment>
<comment type="similarity">
    <text evidence="1">Belongs to the transferase hexapeptide repeat family. DapH subfamily.</text>
</comment>
<organism>
    <name type="scientific">Staphylococcus aureus (strain MRSA252)</name>
    <dbReference type="NCBI Taxonomy" id="282458"/>
    <lineage>
        <taxon>Bacteria</taxon>
        <taxon>Bacillati</taxon>
        <taxon>Bacillota</taxon>
        <taxon>Bacilli</taxon>
        <taxon>Bacillales</taxon>
        <taxon>Staphylococcaceae</taxon>
        <taxon>Staphylococcus</taxon>
    </lineage>
</organism>
<accession>Q6GH11</accession>
<reference key="1">
    <citation type="journal article" date="2004" name="Proc. Natl. Acad. Sci. U.S.A.">
        <title>Complete genomes of two clinical Staphylococcus aureus strains: evidence for the rapid evolution of virulence and drug resistance.</title>
        <authorList>
            <person name="Holden M.T.G."/>
            <person name="Feil E.J."/>
            <person name="Lindsay J.A."/>
            <person name="Peacock S.J."/>
            <person name="Day N.P.J."/>
            <person name="Enright M.C."/>
            <person name="Foster T.J."/>
            <person name="Moore C.E."/>
            <person name="Hurst L."/>
            <person name="Atkin R."/>
            <person name="Barron A."/>
            <person name="Bason N."/>
            <person name="Bentley S.D."/>
            <person name="Chillingworth C."/>
            <person name="Chillingworth T."/>
            <person name="Churcher C."/>
            <person name="Clark L."/>
            <person name="Corton C."/>
            <person name="Cronin A."/>
            <person name="Doggett J."/>
            <person name="Dowd L."/>
            <person name="Feltwell T."/>
            <person name="Hance Z."/>
            <person name="Harris B."/>
            <person name="Hauser H."/>
            <person name="Holroyd S."/>
            <person name="Jagels K."/>
            <person name="James K.D."/>
            <person name="Lennard N."/>
            <person name="Line A."/>
            <person name="Mayes R."/>
            <person name="Moule S."/>
            <person name="Mungall K."/>
            <person name="Ormond D."/>
            <person name="Quail M.A."/>
            <person name="Rabbinowitsch E."/>
            <person name="Rutherford K.M."/>
            <person name="Sanders M."/>
            <person name="Sharp S."/>
            <person name="Simmonds M."/>
            <person name="Stevens K."/>
            <person name="Whitehead S."/>
            <person name="Barrell B.G."/>
            <person name="Spratt B.G."/>
            <person name="Parkhill J."/>
        </authorList>
    </citation>
    <scope>NUCLEOTIDE SEQUENCE [LARGE SCALE GENOMIC DNA]</scope>
    <source>
        <strain>MRSA252</strain>
    </source>
</reference>
<name>DAPH_STAAR</name>
<gene>
    <name evidence="1" type="primary">dapH</name>
    <name type="ordered locus">SAR1409</name>
</gene>
<proteinExistence type="inferred from homology"/>
<feature type="chain" id="PRO_0000376691" description="2,3,4,5-tetrahydropyridine-2,6-dicarboxylate N-acetyltransferase">
    <location>
        <begin position="1"/>
        <end position="239"/>
    </location>
</feature>
<protein>
    <recommendedName>
        <fullName evidence="1">2,3,4,5-tetrahydropyridine-2,6-dicarboxylate N-acetyltransferase</fullName>
        <ecNumber evidence="1">2.3.1.89</ecNumber>
    </recommendedName>
    <alternativeName>
        <fullName evidence="1">Tetrahydrodipicolinate N-acetyltransferase</fullName>
        <shortName evidence="1">THP acetyltransferase</shortName>
        <shortName evidence="1">Tetrahydropicolinate acetylase</shortName>
    </alternativeName>
</protein>
<sequence length="239" mass="25186">MVQHLTAEEIIQYISDAKKSTPIKVYLNGNFEGITYPESFKVFGSEQSKVIFCEADDWKPFYEAYGSQFGDIEIEMDRRNSAIPLKDLTNTNARIEPGAFIREQAIIEDGAVVMMGATINIGAVVGEGTMIDMNATLGGRATTGKNVHVGAGAVLAGVIEPPSASPVIIEDDVLIGANAVILEGVRVGKGAIVAAGAIVTQDVPAGAVVAGTPAKVIKQASEVQDTKKEIVAALRKLND</sequence>
<keyword id="KW-0012">Acyltransferase</keyword>
<keyword id="KW-0028">Amino-acid biosynthesis</keyword>
<keyword id="KW-0220">Diaminopimelate biosynthesis</keyword>
<keyword id="KW-0457">Lysine biosynthesis</keyword>
<keyword id="KW-0677">Repeat</keyword>
<keyword id="KW-0808">Transferase</keyword>
<dbReference type="EC" id="2.3.1.89" evidence="1"/>
<dbReference type="EMBL" id="BX571856">
    <property type="protein sequence ID" value="CAG40406.1"/>
    <property type="molecule type" value="Genomic_DNA"/>
</dbReference>
<dbReference type="SMR" id="Q6GH11"/>
<dbReference type="KEGG" id="sar:SAR1409"/>
<dbReference type="HOGENOM" id="CLU_103751_0_0_9"/>
<dbReference type="UniPathway" id="UPA00034">
    <property type="reaction ID" value="UER00022"/>
</dbReference>
<dbReference type="Proteomes" id="UP000000596">
    <property type="component" value="Chromosome"/>
</dbReference>
<dbReference type="GO" id="GO:0047200">
    <property type="term" value="F:tetrahydrodipicolinate N-acetyltransferase activity"/>
    <property type="evidence" value="ECO:0007669"/>
    <property type="project" value="UniProtKB-EC"/>
</dbReference>
<dbReference type="GO" id="GO:0019877">
    <property type="term" value="P:diaminopimelate biosynthetic process"/>
    <property type="evidence" value="ECO:0007669"/>
    <property type="project" value="UniProtKB-UniRule"/>
</dbReference>
<dbReference type="GO" id="GO:0009089">
    <property type="term" value="P:lysine biosynthetic process via diaminopimelate"/>
    <property type="evidence" value="ECO:0007669"/>
    <property type="project" value="UniProtKB-UniRule"/>
</dbReference>
<dbReference type="CDD" id="cd03350">
    <property type="entry name" value="LbH_THP_succinylT"/>
    <property type="match status" value="1"/>
</dbReference>
<dbReference type="Gene3D" id="2.160.10.10">
    <property type="entry name" value="Hexapeptide repeat proteins"/>
    <property type="match status" value="1"/>
</dbReference>
<dbReference type="Gene3D" id="3.30.70.250">
    <property type="entry name" value="Malonyl-CoA ACP transacylase, ACP-binding"/>
    <property type="match status" value="1"/>
</dbReference>
<dbReference type="HAMAP" id="MF_01691">
    <property type="entry name" value="DapH"/>
    <property type="match status" value="1"/>
</dbReference>
<dbReference type="InterPro" id="IPR019873">
    <property type="entry name" value="DapH"/>
</dbReference>
<dbReference type="InterPro" id="IPR013710">
    <property type="entry name" value="DapH_N"/>
</dbReference>
<dbReference type="InterPro" id="IPR001451">
    <property type="entry name" value="Hexapep"/>
</dbReference>
<dbReference type="InterPro" id="IPR018357">
    <property type="entry name" value="Hexapep_transf_CS"/>
</dbReference>
<dbReference type="InterPro" id="IPR050179">
    <property type="entry name" value="Trans_hexapeptide_repeat"/>
</dbReference>
<dbReference type="InterPro" id="IPR011004">
    <property type="entry name" value="Trimer_LpxA-like_sf"/>
</dbReference>
<dbReference type="NCBIfam" id="TIGR03532">
    <property type="entry name" value="DapD_Ac"/>
    <property type="match status" value="1"/>
</dbReference>
<dbReference type="PANTHER" id="PTHR43300:SF10">
    <property type="entry name" value="2,3,4,5-TETRAHYDROPYRIDINE-2,6-DICARBOXYLATE N-ACETYLTRANSFERASE"/>
    <property type="match status" value="1"/>
</dbReference>
<dbReference type="PANTHER" id="PTHR43300">
    <property type="entry name" value="ACETYLTRANSFERASE"/>
    <property type="match status" value="1"/>
</dbReference>
<dbReference type="Pfam" id="PF08503">
    <property type="entry name" value="DapH_N"/>
    <property type="match status" value="1"/>
</dbReference>
<dbReference type="Pfam" id="PF00132">
    <property type="entry name" value="Hexapep"/>
    <property type="match status" value="1"/>
</dbReference>
<dbReference type="Pfam" id="PF14602">
    <property type="entry name" value="Hexapep_2"/>
    <property type="match status" value="1"/>
</dbReference>
<dbReference type="SUPFAM" id="SSF51161">
    <property type="entry name" value="Trimeric LpxA-like enzymes"/>
    <property type="match status" value="1"/>
</dbReference>
<dbReference type="PROSITE" id="PS00101">
    <property type="entry name" value="HEXAPEP_TRANSFERASES"/>
    <property type="match status" value="1"/>
</dbReference>